<keyword id="KW-0012">Acyltransferase</keyword>
<keyword id="KW-0963">Cytoplasm</keyword>
<keyword id="KW-0408">Iron</keyword>
<keyword id="KW-0479">Metal-binding</keyword>
<keyword id="KW-0808">Transferase</keyword>
<keyword id="KW-0819">tRNA processing</keyword>
<sequence length="356" mass="38603">MSIILSLETSCDESAAALVSNEKGKIDLLANEIASQIDEHANWGGVVPEIASRRHLENLPFLIEEVFAKSTLQIKDIDAVAATVTPGLAGSLLVGSITARTLANLHQIPFLGIHHLEGHLSSIYLSENHPKPPFLVLLVSGGHTELIKVDVKHKYQRLGRSHDDAAGEAFDKVARLLGLSYPGGPAIQKIAKSGDPKKFLFPKGRVSKPEGGFYPYDFSFSGLKTAVFRQIEKIRSENKKLPIEDIAASFEYIVAEVLVERSFKCALDQGLNSLVLVGGVAANVRLREMMLAKASKNSIDITLAPMEFCTDNAAMIGAAALLRLSSEGFKSSMELGVSARWPLEKSDSLYDPIPPF</sequence>
<feature type="chain" id="PRO_0000303484" description="tRNA N6-adenosine threonylcarbamoyltransferase">
    <location>
        <begin position="1"/>
        <end position="356"/>
    </location>
</feature>
<feature type="binding site" evidence="1">
    <location>
        <position position="115"/>
    </location>
    <ligand>
        <name>Fe cation</name>
        <dbReference type="ChEBI" id="CHEBI:24875"/>
    </ligand>
</feature>
<feature type="binding site" evidence="1">
    <location>
        <position position="119"/>
    </location>
    <ligand>
        <name>Fe cation</name>
        <dbReference type="ChEBI" id="CHEBI:24875"/>
    </ligand>
</feature>
<feature type="binding site" evidence="1">
    <location>
        <begin position="138"/>
        <end position="142"/>
    </location>
    <ligand>
        <name>substrate</name>
    </ligand>
</feature>
<feature type="binding site" evidence="1">
    <location>
        <position position="171"/>
    </location>
    <ligand>
        <name>substrate</name>
    </ligand>
</feature>
<feature type="binding site" evidence="1">
    <location>
        <position position="184"/>
    </location>
    <ligand>
        <name>substrate</name>
    </ligand>
</feature>
<feature type="binding site" evidence="1">
    <location>
        <position position="283"/>
    </location>
    <ligand>
        <name>substrate</name>
    </ligand>
</feature>
<feature type="binding site" evidence="1">
    <location>
        <position position="311"/>
    </location>
    <ligand>
        <name>Fe cation</name>
        <dbReference type="ChEBI" id="CHEBI:24875"/>
    </ligand>
</feature>
<accession>A2C0S7</accession>
<proteinExistence type="inferred from homology"/>
<name>TSAD_PROM1</name>
<evidence type="ECO:0000255" key="1">
    <source>
        <dbReference type="HAMAP-Rule" id="MF_01445"/>
    </source>
</evidence>
<gene>
    <name evidence="1" type="primary">tsaD</name>
    <name type="synonym">gcp</name>
    <name type="ordered locus">NATL1_05251</name>
</gene>
<comment type="function">
    <text evidence="1">Required for the formation of a threonylcarbamoyl group on adenosine at position 37 (t(6)A37) in tRNAs that read codons beginning with adenine. Is involved in the transfer of the threonylcarbamoyl moiety of threonylcarbamoyl-AMP (TC-AMP) to the N6 group of A37, together with TsaE and TsaB. TsaD likely plays a direct catalytic role in this reaction.</text>
</comment>
<comment type="catalytic activity">
    <reaction evidence="1">
        <text>L-threonylcarbamoyladenylate + adenosine(37) in tRNA = N(6)-L-threonylcarbamoyladenosine(37) in tRNA + AMP + H(+)</text>
        <dbReference type="Rhea" id="RHEA:37059"/>
        <dbReference type="Rhea" id="RHEA-COMP:10162"/>
        <dbReference type="Rhea" id="RHEA-COMP:10163"/>
        <dbReference type="ChEBI" id="CHEBI:15378"/>
        <dbReference type="ChEBI" id="CHEBI:73682"/>
        <dbReference type="ChEBI" id="CHEBI:74411"/>
        <dbReference type="ChEBI" id="CHEBI:74418"/>
        <dbReference type="ChEBI" id="CHEBI:456215"/>
        <dbReference type="EC" id="2.3.1.234"/>
    </reaction>
</comment>
<comment type="cofactor">
    <cofactor evidence="1">
        <name>Fe(2+)</name>
        <dbReference type="ChEBI" id="CHEBI:29033"/>
    </cofactor>
    <text evidence="1">Binds 1 Fe(2+) ion per subunit.</text>
</comment>
<comment type="subcellular location">
    <subcellularLocation>
        <location evidence="1">Cytoplasm</location>
    </subcellularLocation>
</comment>
<comment type="similarity">
    <text evidence="1">Belongs to the KAE1 / TsaD family.</text>
</comment>
<reference key="1">
    <citation type="journal article" date="2007" name="PLoS Genet.">
        <title>Patterns and implications of gene gain and loss in the evolution of Prochlorococcus.</title>
        <authorList>
            <person name="Kettler G.C."/>
            <person name="Martiny A.C."/>
            <person name="Huang K."/>
            <person name="Zucker J."/>
            <person name="Coleman M.L."/>
            <person name="Rodrigue S."/>
            <person name="Chen F."/>
            <person name="Lapidus A."/>
            <person name="Ferriera S."/>
            <person name="Johnson J."/>
            <person name="Steglich C."/>
            <person name="Church G.M."/>
            <person name="Richardson P."/>
            <person name="Chisholm S.W."/>
        </authorList>
    </citation>
    <scope>NUCLEOTIDE SEQUENCE [LARGE SCALE GENOMIC DNA]</scope>
    <source>
        <strain>NATL1A</strain>
    </source>
</reference>
<dbReference type="EC" id="2.3.1.234" evidence="1"/>
<dbReference type="EMBL" id="CP000553">
    <property type="protein sequence ID" value="ABM75087.1"/>
    <property type="molecule type" value="Genomic_DNA"/>
</dbReference>
<dbReference type="RefSeq" id="WP_011823267.1">
    <property type="nucleotide sequence ID" value="NC_008819.1"/>
</dbReference>
<dbReference type="SMR" id="A2C0S7"/>
<dbReference type="KEGG" id="pme:NATL1_05251"/>
<dbReference type="eggNOG" id="COG0533">
    <property type="taxonomic scope" value="Bacteria"/>
</dbReference>
<dbReference type="HOGENOM" id="CLU_023208_0_2_3"/>
<dbReference type="Proteomes" id="UP000002592">
    <property type="component" value="Chromosome"/>
</dbReference>
<dbReference type="GO" id="GO:0005737">
    <property type="term" value="C:cytoplasm"/>
    <property type="evidence" value="ECO:0007669"/>
    <property type="project" value="UniProtKB-SubCell"/>
</dbReference>
<dbReference type="GO" id="GO:0005506">
    <property type="term" value="F:iron ion binding"/>
    <property type="evidence" value="ECO:0007669"/>
    <property type="project" value="UniProtKB-UniRule"/>
</dbReference>
<dbReference type="GO" id="GO:0061711">
    <property type="term" value="F:N(6)-L-threonylcarbamoyladenine synthase activity"/>
    <property type="evidence" value="ECO:0007669"/>
    <property type="project" value="UniProtKB-EC"/>
</dbReference>
<dbReference type="GO" id="GO:0002949">
    <property type="term" value="P:tRNA threonylcarbamoyladenosine modification"/>
    <property type="evidence" value="ECO:0007669"/>
    <property type="project" value="UniProtKB-UniRule"/>
</dbReference>
<dbReference type="CDD" id="cd24133">
    <property type="entry name" value="ASKHA_NBD_TsaD_bac"/>
    <property type="match status" value="1"/>
</dbReference>
<dbReference type="FunFam" id="3.30.420.40:FF:000012">
    <property type="entry name" value="tRNA N6-adenosine threonylcarbamoyltransferase"/>
    <property type="match status" value="1"/>
</dbReference>
<dbReference type="FunFam" id="3.30.420.40:FF:000040">
    <property type="entry name" value="tRNA N6-adenosine threonylcarbamoyltransferase"/>
    <property type="match status" value="1"/>
</dbReference>
<dbReference type="Gene3D" id="3.30.420.40">
    <property type="match status" value="2"/>
</dbReference>
<dbReference type="HAMAP" id="MF_01445">
    <property type="entry name" value="TsaD"/>
    <property type="match status" value="1"/>
</dbReference>
<dbReference type="InterPro" id="IPR043129">
    <property type="entry name" value="ATPase_NBD"/>
</dbReference>
<dbReference type="InterPro" id="IPR000905">
    <property type="entry name" value="Gcp-like_dom"/>
</dbReference>
<dbReference type="InterPro" id="IPR017861">
    <property type="entry name" value="KAE1/TsaD"/>
</dbReference>
<dbReference type="InterPro" id="IPR017860">
    <property type="entry name" value="Peptidase_M22_CS"/>
</dbReference>
<dbReference type="InterPro" id="IPR022450">
    <property type="entry name" value="TsaD"/>
</dbReference>
<dbReference type="NCBIfam" id="TIGR00329">
    <property type="entry name" value="gcp_kae1"/>
    <property type="match status" value="1"/>
</dbReference>
<dbReference type="NCBIfam" id="TIGR03723">
    <property type="entry name" value="T6A_TsaD_YgjD"/>
    <property type="match status" value="1"/>
</dbReference>
<dbReference type="PANTHER" id="PTHR11735">
    <property type="entry name" value="TRNA N6-ADENOSINE THREONYLCARBAMOYLTRANSFERASE"/>
    <property type="match status" value="1"/>
</dbReference>
<dbReference type="PANTHER" id="PTHR11735:SF6">
    <property type="entry name" value="TRNA N6-ADENOSINE THREONYLCARBAMOYLTRANSFERASE, MITOCHONDRIAL"/>
    <property type="match status" value="1"/>
</dbReference>
<dbReference type="Pfam" id="PF00814">
    <property type="entry name" value="TsaD"/>
    <property type="match status" value="1"/>
</dbReference>
<dbReference type="PRINTS" id="PR00789">
    <property type="entry name" value="OSIALOPTASE"/>
</dbReference>
<dbReference type="SUPFAM" id="SSF53067">
    <property type="entry name" value="Actin-like ATPase domain"/>
    <property type="match status" value="2"/>
</dbReference>
<dbReference type="PROSITE" id="PS01016">
    <property type="entry name" value="GLYCOPROTEASE"/>
    <property type="match status" value="1"/>
</dbReference>
<organism>
    <name type="scientific">Prochlorococcus marinus (strain NATL1A)</name>
    <dbReference type="NCBI Taxonomy" id="167555"/>
    <lineage>
        <taxon>Bacteria</taxon>
        <taxon>Bacillati</taxon>
        <taxon>Cyanobacteriota</taxon>
        <taxon>Cyanophyceae</taxon>
        <taxon>Synechococcales</taxon>
        <taxon>Prochlorococcaceae</taxon>
        <taxon>Prochlorococcus</taxon>
    </lineage>
</organism>
<protein>
    <recommendedName>
        <fullName evidence="1">tRNA N6-adenosine threonylcarbamoyltransferase</fullName>
        <ecNumber evidence="1">2.3.1.234</ecNumber>
    </recommendedName>
    <alternativeName>
        <fullName evidence="1">N6-L-threonylcarbamoyladenine synthase</fullName>
        <shortName evidence="1">t(6)A synthase</shortName>
    </alternativeName>
    <alternativeName>
        <fullName evidence="1">t(6)A37 threonylcarbamoyladenosine biosynthesis protein TsaD</fullName>
    </alternativeName>
    <alternativeName>
        <fullName evidence="1">tRNA threonylcarbamoyladenosine biosynthesis protein TsaD</fullName>
    </alternativeName>
</protein>